<gene>
    <name evidence="1" type="primary">cbiN</name>
    <name type="ordered locus">AF_0729</name>
</gene>
<accession>O29529</accession>
<proteinExistence type="inferred from homology"/>
<name>CBIN_ARCFU</name>
<feature type="chain" id="PRO_0000134700" description="Cobalt transport protein CbiN">
    <location>
        <begin position="1"/>
        <end position="87"/>
    </location>
</feature>
<feature type="transmembrane region" description="Helical" evidence="1">
    <location>
        <begin position="4"/>
        <end position="24"/>
    </location>
</feature>
<feature type="transmembrane region" description="Helical" evidence="1">
    <location>
        <begin position="58"/>
        <end position="78"/>
    </location>
</feature>
<reference key="1">
    <citation type="journal article" date="1997" name="Nature">
        <title>The complete genome sequence of the hyperthermophilic, sulphate-reducing archaeon Archaeoglobus fulgidus.</title>
        <authorList>
            <person name="Klenk H.-P."/>
            <person name="Clayton R.A."/>
            <person name="Tomb J.-F."/>
            <person name="White O."/>
            <person name="Nelson K.E."/>
            <person name="Ketchum K.A."/>
            <person name="Dodson R.J."/>
            <person name="Gwinn M.L."/>
            <person name="Hickey E.K."/>
            <person name="Peterson J.D."/>
            <person name="Richardson D.L."/>
            <person name="Kerlavage A.R."/>
            <person name="Graham D.E."/>
            <person name="Kyrpides N.C."/>
            <person name="Fleischmann R.D."/>
            <person name="Quackenbush J."/>
            <person name="Lee N.H."/>
            <person name="Sutton G.G."/>
            <person name="Gill S.R."/>
            <person name="Kirkness E.F."/>
            <person name="Dougherty B.A."/>
            <person name="McKenney K."/>
            <person name="Adams M.D."/>
            <person name="Loftus B.J."/>
            <person name="Peterson S.N."/>
            <person name="Reich C.I."/>
            <person name="McNeil L.K."/>
            <person name="Badger J.H."/>
            <person name="Glodek A."/>
            <person name="Zhou L."/>
            <person name="Overbeek R."/>
            <person name="Gocayne J.D."/>
            <person name="Weidman J.F."/>
            <person name="McDonald L.A."/>
            <person name="Utterback T.R."/>
            <person name="Cotton M.D."/>
            <person name="Spriggs T."/>
            <person name="Artiach P."/>
            <person name="Kaine B.P."/>
            <person name="Sykes S.M."/>
            <person name="Sadow P.W."/>
            <person name="D'Andrea K.P."/>
            <person name="Bowman C."/>
            <person name="Fujii C."/>
            <person name="Garland S.A."/>
            <person name="Mason T.M."/>
            <person name="Olsen G.J."/>
            <person name="Fraser C.M."/>
            <person name="Smith H.O."/>
            <person name="Woese C.R."/>
            <person name="Venter J.C."/>
        </authorList>
    </citation>
    <scope>NUCLEOTIDE SEQUENCE [LARGE SCALE GENOMIC DNA]</scope>
    <source>
        <strain>ATCC 49558 / DSM 4304 / JCM 9628 / NBRC 100126 / VC-16</strain>
    </source>
</reference>
<dbReference type="EMBL" id="AE000782">
    <property type="protein sequence ID" value="AAB90508.1"/>
    <property type="molecule type" value="Genomic_DNA"/>
</dbReference>
<dbReference type="PIR" id="A69341">
    <property type="entry name" value="A69341"/>
</dbReference>
<dbReference type="RefSeq" id="WP_010878232.1">
    <property type="nucleotide sequence ID" value="NC_000917.1"/>
</dbReference>
<dbReference type="STRING" id="224325.AF_0729"/>
<dbReference type="PaxDb" id="224325-AF_0729"/>
<dbReference type="EnsemblBacteria" id="AAB90508">
    <property type="protein sequence ID" value="AAB90508"/>
    <property type="gene ID" value="AF_0729"/>
</dbReference>
<dbReference type="KEGG" id="afu:AF_0729"/>
<dbReference type="eggNOG" id="arCOG04384">
    <property type="taxonomic scope" value="Archaea"/>
</dbReference>
<dbReference type="HOGENOM" id="CLU_136197_2_0_2"/>
<dbReference type="OrthoDB" id="187156at2157"/>
<dbReference type="PhylomeDB" id="O29529"/>
<dbReference type="UniPathway" id="UPA00148"/>
<dbReference type="Proteomes" id="UP000002199">
    <property type="component" value="Chromosome"/>
</dbReference>
<dbReference type="GO" id="GO:0005886">
    <property type="term" value="C:plasma membrane"/>
    <property type="evidence" value="ECO:0007669"/>
    <property type="project" value="UniProtKB-SubCell"/>
</dbReference>
<dbReference type="GO" id="GO:0015087">
    <property type="term" value="F:cobalt ion transmembrane transporter activity"/>
    <property type="evidence" value="ECO:0007669"/>
    <property type="project" value="UniProtKB-UniRule"/>
</dbReference>
<dbReference type="GO" id="GO:0009236">
    <property type="term" value="P:cobalamin biosynthetic process"/>
    <property type="evidence" value="ECO:0007669"/>
    <property type="project" value="UniProtKB-UniRule"/>
</dbReference>
<dbReference type="HAMAP" id="MF_00330">
    <property type="entry name" value="CbiN"/>
    <property type="match status" value="1"/>
</dbReference>
<dbReference type="InterPro" id="IPR003705">
    <property type="entry name" value="CbiN"/>
</dbReference>
<dbReference type="NCBIfam" id="TIGR01165">
    <property type="entry name" value="cbiN"/>
    <property type="match status" value="1"/>
</dbReference>
<dbReference type="NCBIfam" id="NF002780">
    <property type="entry name" value="PRK02898.1"/>
    <property type="match status" value="1"/>
</dbReference>
<dbReference type="PANTHER" id="PTHR38662">
    <property type="entry name" value="COBALT TRANSPORT PROTEIN CBIN"/>
    <property type="match status" value="1"/>
</dbReference>
<dbReference type="PANTHER" id="PTHR38662:SF1">
    <property type="entry name" value="COBALT TRANSPORT PROTEIN CBIN"/>
    <property type="match status" value="1"/>
</dbReference>
<dbReference type="Pfam" id="PF02553">
    <property type="entry name" value="CbiN"/>
    <property type="match status" value="1"/>
</dbReference>
<protein>
    <recommendedName>
        <fullName evidence="1">Cobalt transport protein CbiN</fullName>
    </recommendedName>
    <alternativeName>
        <fullName evidence="1">Energy-coupling factor transporter probable substrate-capture protein CbiN</fullName>
        <shortName evidence="1">ECF transporter S component CbiN</shortName>
    </alternativeName>
</protein>
<organism>
    <name type="scientific">Archaeoglobus fulgidus (strain ATCC 49558 / DSM 4304 / JCM 9628 / NBRC 100126 / VC-16)</name>
    <dbReference type="NCBI Taxonomy" id="224325"/>
    <lineage>
        <taxon>Archaea</taxon>
        <taxon>Methanobacteriati</taxon>
        <taxon>Methanobacteriota</taxon>
        <taxon>Archaeoglobi</taxon>
        <taxon>Archaeoglobales</taxon>
        <taxon>Archaeoglobaceae</taxon>
        <taxon>Archaeoglobus</taxon>
    </lineage>
</organism>
<comment type="function">
    <text evidence="1">Part of the energy-coupling factor (ECF) transporter complex CbiMNOQ involved in cobalt import.</text>
</comment>
<comment type="pathway">
    <text evidence="1">Cofactor biosynthesis; adenosylcobalamin biosynthesis.</text>
</comment>
<comment type="subunit">
    <text evidence="1">Forms an energy-coupling factor (ECF) transporter complex composed of an ATP-binding protein (A component, CbiO), a transmembrane protein (T component, CbiQ) and 2 possible substrate-capture proteins (S components, CbiM and CbiN) of unknown stoichimetry.</text>
</comment>
<comment type="subcellular location">
    <subcellularLocation>
        <location evidence="1">Cell membrane</location>
        <topology evidence="1">Multi-pass membrane protein</topology>
    </subcellularLocation>
</comment>
<comment type="similarity">
    <text evidence="1">Belongs to the CbiN family.</text>
</comment>
<keyword id="KW-1003">Cell membrane</keyword>
<keyword id="KW-0169">Cobalamin biosynthesis</keyword>
<keyword id="KW-0170">Cobalt</keyword>
<keyword id="KW-0171">Cobalt transport</keyword>
<keyword id="KW-0406">Ion transport</keyword>
<keyword id="KW-0472">Membrane</keyword>
<keyword id="KW-1185">Reference proteome</keyword>
<keyword id="KW-0812">Transmembrane</keyword>
<keyword id="KW-1133">Transmembrane helix</keyword>
<keyword id="KW-0813">Transport</keyword>
<sequence>MKKLLLLLILLIFAAKVTAEEWAGADEKAEEVIKELKPDYEPWFSPIFEPPSGEIESMLFSLQAAIGSLIIGYFLGYYRGLKHARNA</sequence>
<evidence type="ECO:0000255" key="1">
    <source>
        <dbReference type="HAMAP-Rule" id="MF_00330"/>
    </source>
</evidence>